<protein>
    <recommendedName>
        <fullName evidence="1">Mannonate dehydratase</fullName>
        <ecNumber evidence="1">4.2.1.8</ecNumber>
    </recommendedName>
    <alternativeName>
        <fullName evidence="1">D-mannonate hydro-lyase</fullName>
    </alternativeName>
</protein>
<sequence>MEMSFRWYGEDDPVTLENIGQIPTMKGIVTAIYDVPVGEVWSRERIQQLKEKVEAAGLKISVIESVPVHEDIKLGRPTRDLLIDNYIQTVKNLAAEGIDTICYNFMPVFDWTRTDLAYQYPDGSTALIFDETVSKKMDPVNGELSLPGWDASYSKEEMKAIMDAYAEIDEEKLWENLTYFIKRIIPEAEAVGVKMAIHPDDPPYSIFGLPRIITGLEAIERFVKLYDSKSNGITLCVGSYASDPQNDVLEISRRAFELDRVNFVHARNIKLGDGKSFKESAHPSEYGSIDMYEVIKLCHEFGFEGAIRPDHGRMIWGETGRPGYGLYDRALGATYVSGLYEAVIKGSK</sequence>
<keyword id="KW-0408">Iron</keyword>
<keyword id="KW-0456">Lyase</keyword>
<keyword id="KW-0464">Manganese</keyword>
<keyword id="KW-1185">Reference proteome</keyword>
<organism>
    <name type="scientific">Streptococcus agalactiae serotype V (strain ATCC BAA-611 / 2603 V/R)</name>
    <dbReference type="NCBI Taxonomy" id="208435"/>
    <lineage>
        <taxon>Bacteria</taxon>
        <taxon>Bacillati</taxon>
        <taxon>Bacillota</taxon>
        <taxon>Bacilli</taxon>
        <taxon>Lactobacillales</taxon>
        <taxon>Streptococcaceae</taxon>
        <taxon>Streptococcus</taxon>
    </lineage>
</organism>
<feature type="chain" id="PRO_0000170688" description="Mannonate dehydratase">
    <location>
        <begin position="1"/>
        <end position="348"/>
    </location>
</feature>
<evidence type="ECO:0000255" key="1">
    <source>
        <dbReference type="HAMAP-Rule" id="MF_00106"/>
    </source>
</evidence>
<reference key="1">
    <citation type="journal article" date="2002" name="Proc. Natl. Acad. Sci. U.S.A.">
        <title>Complete genome sequence and comparative genomic analysis of an emerging human pathogen, serotype V Streptococcus agalactiae.</title>
        <authorList>
            <person name="Tettelin H."/>
            <person name="Masignani V."/>
            <person name="Cieslewicz M.J."/>
            <person name="Eisen J.A."/>
            <person name="Peterson S.N."/>
            <person name="Wessels M.R."/>
            <person name="Paulsen I.T."/>
            <person name="Nelson K.E."/>
            <person name="Margarit I."/>
            <person name="Read T.D."/>
            <person name="Madoff L.C."/>
            <person name="Wolf A.M."/>
            <person name="Beanan M.J."/>
            <person name="Brinkac L.M."/>
            <person name="Daugherty S.C."/>
            <person name="DeBoy R.T."/>
            <person name="Durkin A.S."/>
            <person name="Kolonay J.F."/>
            <person name="Madupu R."/>
            <person name="Lewis M.R."/>
            <person name="Radune D."/>
            <person name="Fedorova N.B."/>
            <person name="Scanlan D."/>
            <person name="Khouri H.M."/>
            <person name="Mulligan S."/>
            <person name="Carty H.A."/>
            <person name="Cline R.T."/>
            <person name="Van Aken S.E."/>
            <person name="Gill J."/>
            <person name="Scarselli M."/>
            <person name="Mora M."/>
            <person name="Iacobini E.T."/>
            <person name="Brettoni C."/>
            <person name="Galli G."/>
            <person name="Mariani M."/>
            <person name="Vegni F."/>
            <person name="Maione D."/>
            <person name="Rinaudo D."/>
            <person name="Rappuoli R."/>
            <person name="Telford J.L."/>
            <person name="Kasper D.L."/>
            <person name="Grandi G."/>
            <person name="Fraser C.M."/>
        </authorList>
    </citation>
    <scope>NUCLEOTIDE SEQUENCE [LARGE SCALE GENOMIC DNA]</scope>
    <source>
        <strain>ATCC BAA-611 / 2603 V/R</strain>
    </source>
</reference>
<comment type="function">
    <text evidence="1">Catalyzes the dehydration of D-mannonate.</text>
</comment>
<comment type="catalytic activity">
    <reaction evidence="1">
        <text>D-mannonate = 2-dehydro-3-deoxy-D-gluconate + H2O</text>
        <dbReference type="Rhea" id="RHEA:20097"/>
        <dbReference type="ChEBI" id="CHEBI:15377"/>
        <dbReference type="ChEBI" id="CHEBI:17767"/>
        <dbReference type="ChEBI" id="CHEBI:57990"/>
        <dbReference type="EC" id="4.2.1.8"/>
    </reaction>
</comment>
<comment type="cofactor">
    <cofactor evidence="1">
        <name>Fe(2+)</name>
        <dbReference type="ChEBI" id="CHEBI:29033"/>
    </cofactor>
    <cofactor evidence="1">
        <name>Mn(2+)</name>
        <dbReference type="ChEBI" id="CHEBI:29035"/>
    </cofactor>
</comment>
<comment type="pathway">
    <text evidence="1">Carbohydrate metabolism; pentose and glucuronate interconversion.</text>
</comment>
<comment type="similarity">
    <text evidence="1">Belongs to the mannonate dehydratase family.</text>
</comment>
<dbReference type="EC" id="4.2.1.8" evidence="1"/>
<dbReference type="EMBL" id="AE009948">
    <property type="protein sequence ID" value="AAM99589.1"/>
    <property type="molecule type" value="Genomic_DNA"/>
</dbReference>
<dbReference type="RefSeq" id="NP_687717.1">
    <property type="nucleotide sequence ID" value="NC_004116.1"/>
</dbReference>
<dbReference type="RefSeq" id="WP_000426045.1">
    <property type="nucleotide sequence ID" value="NC_004116.1"/>
</dbReference>
<dbReference type="SMR" id="Q8E0M8"/>
<dbReference type="STRING" id="208435.SAG0702"/>
<dbReference type="GeneID" id="66885605"/>
<dbReference type="KEGG" id="sag:SAG0702"/>
<dbReference type="PATRIC" id="fig|208435.3.peg.708"/>
<dbReference type="HOGENOM" id="CLU_058621_1_0_9"/>
<dbReference type="OrthoDB" id="9780250at2"/>
<dbReference type="UniPathway" id="UPA00246"/>
<dbReference type="Proteomes" id="UP000000821">
    <property type="component" value="Chromosome"/>
</dbReference>
<dbReference type="GO" id="GO:0008198">
    <property type="term" value="F:ferrous iron binding"/>
    <property type="evidence" value="ECO:0007669"/>
    <property type="project" value="TreeGrafter"/>
</dbReference>
<dbReference type="GO" id="GO:0030145">
    <property type="term" value="F:manganese ion binding"/>
    <property type="evidence" value="ECO:0007669"/>
    <property type="project" value="TreeGrafter"/>
</dbReference>
<dbReference type="GO" id="GO:0008927">
    <property type="term" value="F:mannonate dehydratase activity"/>
    <property type="evidence" value="ECO:0007669"/>
    <property type="project" value="UniProtKB-UniRule"/>
</dbReference>
<dbReference type="GO" id="GO:0042840">
    <property type="term" value="P:D-glucuronate catabolic process"/>
    <property type="evidence" value="ECO:0007669"/>
    <property type="project" value="TreeGrafter"/>
</dbReference>
<dbReference type="Gene3D" id="3.20.20.150">
    <property type="entry name" value="Divalent-metal-dependent TIM barrel enzymes"/>
    <property type="match status" value="1"/>
</dbReference>
<dbReference type="HAMAP" id="MF_00106">
    <property type="entry name" value="UxuA"/>
    <property type="match status" value="1"/>
</dbReference>
<dbReference type="InterPro" id="IPR004628">
    <property type="entry name" value="Man_deHydtase"/>
</dbReference>
<dbReference type="InterPro" id="IPR036237">
    <property type="entry name" value="Xyl_isomerase-like_sf"/>
</dbReference>
<dbReference type="NCBIfam" id="NF003027">
    <property type="entry name" value="PRK03906.1"/>
    <property type="match status" value="2"/>
</dbReference>
<dbReference type="NCBIfam" id="TIGR00695">
    <property type="entry name" value="uxuA"/>
    <property type="match status" value="1"/>
</dbReference>
<dbReference type="PANTHER" id="PTHR30387">
    <property type="entry name" value="MANNONATE DEHYDRATASE"/>
    <property type="match status" value="1"/>
</dbReference>
<dbReference type="PANTHER" id="PTHR30387:SF2">
    <property type="entry name" value="MANNONATE DEHYDRATASE"/>
    <property type="match status" value="1"/>
</dbReference>
<dbReference type="Pfam" id="PF03786">
    <property type="entry name" value="UxuA"/>
    <property type="match status" value="1"/>
</dbReference>
<dbReference type="PIRSF" id="PIRSF016049">
    <property type="entry name" value="Man_dehyd"/>
    <property type="match status" value="1"/>
</dbReference>
<dbReference type="SUPFAM" id="SSF51658">
    <property type="entry name" value="Xylose isomerase-like"/>
    <property type="match status" value="1"/>
</dbReference>
<proteinExistence type="inferred from homology"/>
<name>UXUA_STRA5</name>
<accession>Q8E0M8</accession>
<gene>
    <name evidence="1" type="primary">uxuA</name>
    <name type="ordered locus">SAG0702</name>
</gene>